<proteinExistence type="inferred from homology"/>
<reference key="1">
    <citation type="journal article" date="2008" name="BMC Genomics">
        <title>Acidithiobacillus ferrooxidans metabolism: from genome sequence to industrial applications.</title>
        <authorList>
            <person name="Valdes J."/>
            <person name="Pedroso I."/>
            <person name="Quatrini R."/>
            <person name="Dodson R.J."/>
            <person name="Tettelin H."/>
            <person name="Blake R. II"/>
            <person name="Eisen J.A."/>
            <person name="Holmes D.S."/>
        </authorList>
    </citation>
    <scope>NUCLEOTIDE SEQUENCE [LARGE SCALE GENOMIC DNA]</scope>
    <source>
        <strain>ATCC 23270 / DSM 14882 / CIP 104768 / NCIMB 8455</strain>
    </source>
</reference>
<name>APAG_ACIF2</name>
<keyword id="KW-1185">Reference proteome</keyword>
<organism>
    <name type="scientific">Acidithiobacillus ferrooxidans (strain ATCC 23270 / DSM 14882 / CIP 104768 / NCIMB 8455)</name>
    <name type="common">Ferrobacillus ferrooxidans (strain ATCC 23270)</name>
    <dbReference type="NCBI Taxonomy" id="243159"/>
    <lineage>
        <taxon>Bacteria</taxon>
        <taxon>Pseudomonadati</taxon>
        <taxon>Pseudomonadota</taxon>
        <taxon>Acidithiobacillia</taxon>
        <taxon>Acidithiobacillales</taxon>
        <taxon>Acidithiobacillaceae</taxon>
        <taxon>Acidithiobacillus</taxon>
    </lineage>
</organism>
<feature type="chain" id="PRO_1000133778" description="Protein ApaG">
    <location>
        <begin position="1"/>
        <end position="127"/>
    </location>
</feature>
<feature type="domain" description="ApaG" evidence="1">
    <location>
        <begin position="3"/>
        <end position="127"/>
    </location>
</feature>
<gene>
    <name evidence="1" type="primary">apaG</name>
    <name type="ordered locus">AFE_2738</name>
</gene>
<protein>
    <recommendedName>
        <fullName evidence="1">Protein ApaG</fullName>
    </recommendedName>
</protein>
<dbReference type="EMBL" id="CP001219">
    <property type="protein sequence ID" value="ACK78825.1"/>
    <property type="molecule type" value="Genomic_DNA"/>
</dbReference>
<dbReference type="RefSeq" id="WP_009561099.1">
    <property type="nucleotide sequence ID" value="NC_011761.1"/>
</dbReference>
<dbReference type="SMR" id="B7J8G8"/>
<dbReference type="STRING" id="243159.AFE_2738"/>
<dbReference type="PaxDb" id="243159-AFE_2738"/>
<dbReference type="GeneID" id="65281777"/>
<dbReference type="KEGG" id="afr:AFE_2738"/>
<dbReference type="eggNOG" id="COG2967">
    <property type="taxonomic scope" value="Bacteria"/>
</dbReference>
<dbReference type="HOGENOM" id="CLU_128074_0_0_6"/>
<dbReference type="Proteomes" id="UP000001362">
    <property type="component" value="Chromosome"/>
</dbReference>
<dbReference type="GO" id="GO:0070987">
    <property type="term" value="P:error-free translesion synthesis"/>
    <property type="evidence" value="ECO:0007669"/>
    <property type="project" value="TreeGrafter"/>
</dbReference>
<dbReference type="Gene3D" id="2.60.40.1470">
    <property type="entry name" value="ApaG domain"/>
    <property type="match status" value="1"/>
</dbReference>
<dbReference type="HAMAP" id="MF_00791">
    <property type="entry name" value="ApaG"/>
    <property type="match status" value="1"/>
</dbReference>
<dbReference type="InterPro" id="IPR007474">
    <property type="entry name" value="ApaG_domain"/>
</dbReference>
<dbReference type="InterPro" id="IPR036767">
    <property type="entry name" value="ApaG_sf"/>
</dbReference>
<dbReference type="InterPro" id="IPR023065">
    <property type="entry name" value="Uncharacterised_ApaG"/>
</dbReference>
<dbReference type="NCBIfam" id="NF003967">
    <property type="entry name" value="PRK05461.1"/>
    <property type="match status" value="1"/>
</dbReference>
<dbReference type="PANTHER" id="PTHR14289">
    <property type="entry name" value="F-BOX ONLY PROTEIN 3"/>
    <property type="match status" value="1"/>
</dbReference>
<dbReference type="PANTHER" id="PTHR14289:SF16">
    <property type="entry name" value="POLYMERASE DELTA-INTERACTING PROTEIN 2"/>
    <property type="match status" value="1"/>
</dbReference>
<dbReference type="Pfam" id="PF04379">
    <property type="entry name" value="DUF525"/>
    <property type="match status" value="1"/>
</dbReference>
<dbReference type="SUPFAM" id="SSF110069">
    <property type="entry name" value="ApaG-like"/>
    <property type="match status" value="1"/>
</dbReference>
<dbReference type="PROSITE" id="PS51087">
    <property type="entry name" value="APAG"/>
    <property type="match status" value="1"/>
</dbReference>
<accession>B7J8G8</accession>
<evidence type="ECO:0000255" key="1">
    <source>
        <dbReference type="HAMAP-Rule" id="MF_00791"/>
    </source>
</evidence>
<sequence>MEDQPPTEIQISVETRYLPEQSSPEQEHFAFAYQITMQNNGPQTAQLLSRHWIITDAEGHVQEVKGPGVVGEQPTLQPGQRFRYTSGSVLSTPVGSMHGTFEWVSDTGESFVVPIPAFRLAAATVFH</sequence>